<feature type="chain" id="PRO_0000257715" description="Succinylglutamate desuccinylase">
    <location>
        <begin position="1"/>
        <end position="336"/>
    </location>
</feature>
<feature type="active site" evidence="1">
    <location>
        <position position="215"/>
    </location>
</feature>
<feature type="binding site" evidence="1">
    <location>
        <position position="59"/>
    </location>
    <ligand>
        <name>Zn(2+)</name>
        <dbReference type="ChEBI" id="CHEBI:29105"/>
    </ligand>
</feature>
<feature type="binding site" evidence="1">
    <location>
        <position position="62"/>
    </location>
    <ligand>
        <name>Zn(2+)</name>
        <dbReference type="ChEBI" id="CHEBI:29105"/>
    </ligand>
</feature>
<feature type="binding site" evidence="1">
    <location>
        <position position="151"/>
    </location>
    <ligand>
        <name>Zn(2+)</name>
        <dbReference type="ChEBI" id="CHEBI:29105"/>
    </ligand>
</feature>
<protein>
    <recommendedName>
        <fullName evidence="1">Succinylglutamate desuccinylase</fullName>
        <ecNumber evidence="1">3.5.1.96</ecNumber>
    </recommendedName>
</protein>
<comment type="function">
    <text evidence="1">Transforms N(2)-succinylglutamate into succinate and glutamate.</text>
</comment>
<comment type="catalytic activity">
    <reaction evidence="1">
        <text>N-succinyl-L-glutamate + H2O = L-glutamate + succinate</text>
        <dbReference type="Rhea" id="RHEA:15169"/>
        <dbReference type="ChEBI" id="CHEBI:15377"/>
        <dbReference type="ChEBI" id="CHEBI:29985"/>
        <dbReference type="ChEBI" id="CHEBI:30031"/>
        <dbReference type="ChEBI" id="CHEBI:58763"/>
        <dbReference type="EC" id="3.5.1.96"/>
    </reaction>
</comment>
<comment type="cofactor">
    <cofactor evidence="1">
        <name>Zn(2+)</name>
        <dbReference type="ChEBI" id="CHEBI:29105"/>
    </cofactor>
    <text evidence="1">Binds 1 zinc ion per subunit.</text>
</comment>
<comment type="pathway">
    <text evidence="1">Amino-acid degradation; L-arginine degradation via AST pathway; L-glutamate and succinate from L-arginine: step 5/5.</text>
</comment>
<comment type="similarity">
    <text evidence="1">Belongs to the AspA/AstE family. Succinylglutamate desuccinylase subfamily.</text>
</comment>
<proteinExistence type="inferred from homology"/>
<evidence type="ECO:0000255" key="1">
    <source>
        <dbReference type="HAMAP-Rule" id="MF_00767"/>
    </source>
</evidence>
<sequence length="336" mass="37629">MLALGKLLELTLAGREPAEKTQLTVDGVRMRWLSEGALEVRPPEARDNGLDLLLSAGIHGNETAPIELLDRLLHDIARGDLKPRARILFLFGNPEAMRRGERFVEQDVNRLFNGRHESSSGFEALRACELERLAASFFSQPDRQRLHYDLHTAIRGSKIEQFALYPWKDGRQHSRRELARLRAAGMEAVLLQNKPSIVFSAYTYDQLGAESFTLELGKARPFGQNQGVNVERLETRLKQIIDGSEPPAEQDSLDGLQLFSVAREVIKHSDSFHLHLPADIENFSELEVGYLLAEDIAQTRWVIEETGARIIFPNPKVKNGLRAGILIVPATADGLA</sequence>
<keyword id="KW-0056">Arginine metabolism</keyword>
<keyword id="KW-0378">Hydrolase</keyword>
<keyword id="KW-0479">Metal-binding</keyword>
<keyword id="KW-0862">Zinc</keyword>
<accession>Q4K840</accession>
<reference key="1">
    <citation type="journal article" date="2005" name="Nat. Biotechnol.">
        <title>Complete genome sequence of the plant commensal Pseudomonas fluorescens Pf-5.</title>
        <authorList>
            <person name="Paulsen I.T."/>
            <person name="Press C.M."/>
            <person name="Ravel J."/>
            <person name="Kobayashi D.Y."/>
            <person name="Myers G.S.A."/>
            <person name="Mavrodi D.V."/>
            <person name="DeBoy R.T."/>
            <person name="Seshadri R."/>
            <person name="Ren Q."/>
            <person name="Madupu R."/>
            <person name="Dodson R.J."/>
            <person name="Durkin A.S."/>
            <person name="Brinkac L.M."/>
            <person name="Daugherty S.C."/>
            <person name="Sullivan S.A."/>
            <person name="Rosovitz M.J."/>
            <person name="Gwinn M.L."/>
            <person name="Zhou L."/>
            <person name="Schneider D.J."/>
            <person name="Cartinhour S.W."/>
            <person name="Nelson W.C."/>
            <person name="Weidman J."/>
            <person name="Watkins K."/>
            <person name="Tran K."/>
            <person name="Khouri H."/>
            <person name="Pierson E.A."/>
            <person name="Pierson L.S. III"/>
            <person name="Thomashow L.S."/>
            <person name="Loper J.E."/>
        </authorList>
    </citation>
    <scope>NUCLEOTIDE SEQUENCE [LARGE SCALE GENOMIC DNA]</scope>
    <source>
        <strain>ATCC BAA-477 / NRRL B-23932 / Pf-5</strain>
    </source>
</reference>
<organism>
    <name type="scientific">Pseudomonas fluorescens (strain ATCC BAA-477 / NRRL B-23932 / Pf-5)</name>
    <dbReference type="NCBI Taxonomy" id="220664"/>
    <lineage>
        <taxon>Bacteria</taxon>
        <taxon>Pseudomonadati</taxon>
        <taxon>Pseudomonadota</taxon>
        <taxon>Gammaproteobacteria</taxon>
        <taxon>Pseudomonadales</taxon>
        <taxon>Pseudomonadaceae</taxon>
        <taxon>Pseudomonas</taxon>
    </lineage>
</organism>
<gene>
    <name evidence="1" type="primary">astE</name>
    <name type="ordered locus">PFL_4509</name>
</gene>
<name>ASTE_PSEF5</name>
<dbReference type="EC" id="3.5.1.96" evidence="1"/>
<dbReference type="EMBL" id="CP000076">
    <property type="protein sequence ID" value="AAY93756.1"/>
    <property type="molecule type" value="Genomic_DNA"/>
</dbReference>
<dbReference type="RefSeq" id="WP_011062765.1">
    <property type="nucleotide sequence ID" value="NC_004129.6"/>
</dbReference>
<dbReference type="SMR" id="Q4K840"/>
<dbReference type="STRING" id="220664.PFL_4509"/>
<dbReference type="GeneID" id="57477586"/>
<dbReference type="KEGG" id="pfl:PFL_4509"/>
<dbReference type="PATRIC" id="fig|220664.5.peg.4610"/>
<dbReference type="eggNOG" id="COG2988">
    <property type="taxonomic scope" value="Bacteria"/>
</dbReference>
<dbReference type="HOGENOM" id="CLU_071608_0_0_6"/>
<dbReference type="UniPathway" id="UPA00185">
    <property type="reaction ID" value="UER00283"/>
</dbReference>
<dbReference type="Proteomes" id="UP000008540">
    <property type="component" value="Chromosome"/>
</dbReference>
<dbReference type="GO" id="GO:0016788">
    <property type="term" value="F:hydrolase activity, acting on ester bonds"/>
    <property type="evidence" value="ECO:0007669"/>
    <property type="project" value="UniProtKB-UniRule"/>
</dbReference>
<dbReference type="GO" id="GO:0009017">
    <property type="term" value="F:succinylglutamate desuccinylase activity"/>
    <property type="evidence" value="ECO:0007669"/>
    <property type="project" value="UniProtKB-EC"/>
</dbReference>
<dbReference type="GO" id="GO:0008270">
    <property type="term" value="F:zinc ion binding"/>
    <property type="evidence" value="ECO:0007669"/>
    <property type="project" value="UniProtKB-UniRule"/>
</dbReference>
<dbReference type="GO" id="GO:0019544">
    <property type="term" value="P:arginine catabolic process to glutamate"/>
    <property type="evidence" value="ECO:0007669"/>
    <property type="project" value="UniProtKB-UniRule"/>
</dbReference>
<dbReference type="GO" id="GO:0019545">
    <property type="term" value="P:arginine catabolic process to succinate"/>
    <property type="evidence" value="ECO:0007669"/>
    <property type="project" value="UniProtKB-UniRule"/>
</dbReference>
<dbReference type="CDD" id="cd03855">
    <property type="entry name" value="M14_ASTE"/>
    <property type="match status" value="1"/>
</dbReference>
<dbReference type="Gene3D" id="3.40.630.10">
    <property type="entry name" value="Zn peptidases"/>
    <property type="match status" value="1"/>
</dbReference>
<dbReference type="HAMAP" id="MF_00767">
    <property type="entry name" value="Arg_catab_AstE"/>
    <property type="match status" value="1"/>
</dbReference>
<dbReference type="InterPro" id="IPR050178">
    <property type="entry name" value="AspA/AstE_fam"/>
</dbReference>
<dbReference type="InterPro" id="IPR055438">
    <property type="entry name" value="AstE_AspA_cat"/>
</dbReference>
<dbReference type="InterPro" id="IPR007036">
    <property type="entry name" value="Aste_AspA_hybrid_dom"/>
</dbReference>
<dbReference type="InterPro" id="IPR016681">
    <property type="entry name" value="SuccinylGlu_desuccinylase"/>
</dbReference>
<dbReference type="NCBIfam" id="TIGR03242">
    <property type="entry name" value="arg_catab_astE"/>
    <property type="match status" value="1"/>
</dbReference>
<dbReference type="NCBIfam" id="NF003706">
    <property type="entry name" value="PRK05324.1"/>
    <property type="match status" value="1"/>
</dbReference>
<dbReference type="PANTHER" id="PTHR15162">
    <property type="entry name" value="ASPARTOACYLASE"/>
    <property type="match status" value="1"/>
</dbReference>
<dbReference type="PANTHER" id="PTHR15162:SF7">
    <property type="entry name" value="SUCCINYLGLUTAMATE DESUCCINYLASE"/>
    <property type="match status" value="1"/>
</dbReference>
<dbReference type="Pfam" id="PF24827">
    <property type="entry name" value="AstE_AspA_cat"/>
    <property type="match status" value="1"/>
</dbReference>
<dbReference type="Pfam" id="PF04952">
    <property type="entry name" value="AstE_AspA_hybrid"/>
    <property type="match status" value="1"/>
</dbReference>
<dbReference type="PIRSF" id="PIRSF017020">
    <property type="entry name" value="AstE"/>
    <property type="match status" value="1"/>
</dbReference>
<dbReference type="SUPFAM" id="SSF53187">
    <property type="entry name" value="Zn-dependent exopeptidases"/>
    <property type="match status" value="1"/>
</dbReference>